<protein>
    <recommendedName>
        <fullName evidence="1">Large ribosomal subunit protein bL36</fullName>
    </recommendedName>
    <alternativeName>
        <fullName evidence="2">50S ribosomal protein L36</fullName>
    </alternativeName>
</protein>
<sequence length="37" mass="4333">MKVRPSVKPICEKCKVIRRRGKVMVICENPKHKQKQG</sequence>
<name>RL36_BACMK</name>
<evidence type="ECO:0000255" key="1">
    <source>
        <dbReference type="HAMAP-Rule" id="MF_00251"/>
    </source>
</evidence>
<evidence type="ECO:0000305" key="2"/>
<accession>A9VPA1</accession>
<comment type="similarity">
    <text evidence="1">Belongs to the bacterial ribosomal protein bL36 family.</text>
</comment>
<gene>
    <name evidence="1" type="primary">rpmJ</name>
    <name type="ordered locus">BcerKBAB4_0129</name>
</gene>
<organism>
    <name type="scientific">Bacillus mycoides (strain KBAB4)</name>
    <name type="common">Bacillus weihenstephanensis</name>
    <dbReference type="NCBI Taxonomy" id="315730"/>
    <lineage>
        <taxon>Bacteria</taxon>
        <taxon>Bacillati</taxon>
        <taxon>Bacillota</taxon>
        <taxon>Bacilli</taxon>
        <taxon>Bacillales</taxon>
        <taxon>Bacillaceae</taxon>
        <taxon>Bacillus</taxon>
        <taxon>Bacillus cereus group</taxon>
    </lineage>
</organism>
<keyword id="KW-0687">Ribonucleoprotein</keyword>
<keyword id="KW-0689">Ribosomal protein</keyword>
<dbReference type="EMBL" id="CP000903">
    <property type="protein sequence ID" value="ABY41398.1"/>
    <property type="molecule type" value="Genomic_DNA"/>
</dbReference>
<dbReference type="RefSeq" id="WP_000868344.1">
    <property type="nucleotide sequence ID" value="NZ_CAKMRX030000129.1"/>
</dbReference>
<dbReference type="SMR" id="A9VPA1"/>
<dbReference type="GeneID" id="97822099"/>
<dbReference type="KEGG" id="bwe:BcerKBAB4_0129"/>
<dbReference type="eggNOG" id="COG0257">
    <property type="taxonomic scope" value="Bacteria"/>
</dbReference>
<dbReference type="HOGENOM" id="CLU_135723_6_2_9"/>
<dbReference type="Proteomes" id="UP000002154">
    <property type="component" value="Chromosome"/>
</dbReference>
<dbReference type="GO" id="GO:0005737">
    <property type="term" value="C:cytoplasm"/>
    <property type="evidence" value="ECO:0007669"/>
    <property type="project" value="UniProtKB-ARBA"/>
</dbReference>
<dbReference type="GO" id="GO:1990904">
    <property type="term" value="C:ribonucleoprotein complex"/>
    <property type="evidence" value="ECO:0007669"/>
    <property type="project" value="UniProtKB-KW"/>
</dbReference>
<dbReference type="GO" id="GO:0005840">
    <property type="term" value="C:ribosome"/>
    <property type="evidence" value="ECO:0007669"/>
    <property type="project" value="UniProtKB-KW"/>
</dbReference>
<dbReference type="GO" id="GO:0003735">
    <property type="term" value="F:structural constituent of ribosome"/>
    <property type="evidence" value="ECO:0007669"/>
    <property type="project" value="InterPro"/>
</dbReference>
<dbReference type="GO" id="GO:0006412">
    <property type="term" value="P:translation"/>
    <property type="evidence" value="ECO:0007669"/>
    <property type="project" value="UniProtKB-UniRule"/>
</dbReference>
<dbReference type="HAMAP" id="MF_00251">
    <property type="entry name" value="Ribosomal_bL36"/>
    <property type="match status" value="1"/>
</dbReference>
<dbReference type="InterPro" id="IPR000473">
    <property type="entry name" value="Ribosomal_bL36"/>
</dbReference>
<dbReference type="InterPro" id="IPR035977">
    <property type="entry name" value="Ribosomal_bL36_sp"/>
</dbReference>
<dbReference type="NCBIfam" id="TIGR01022">
    <property type="entry name" value="rpmJ_bact"/>
    <property type="match status" value="1"/>
</dbReference>
<dbReference type="PANTHER" id="PTHR42888">
    <property type="entry name" value="50S RIBOSOMAL PROTEIN L36, CHLOROPLASTIC"/>
    <property type="match status" value="1"/>
</dbReference>
<dbReference type="PANTHER" id="PTHR42888:SF1">
    <property type="entry name" value="LARGE RIBOSOMAL SUBUNIT PROTEIN BL36C"/>
    <property type="match status" value="1"/>
</dbReference>
<dbReference type="Pfam" id="PF00444">
    <property type="entry name" value="Ribosomal_L36"/>
    <property type="match status" value="1"/>
</dbReference>
<dbReference type="SUPFAM" id="SSF57840">
    <property type="entry name" value="Ribosomal protein L36"/>
    <property type="match status" value="1"/>
</dbReference>
<dbReference type="PROSITE" id="PS00828">
    <property type="entry name" value="RIBOSOMAL_L36"/>
    <property type="match status" value="1"/>
</dbReference>
<reference key="1">
    <citation type="journal article" date="2008" name="Chem. Biol. Interact.">
        <title>Extending the Bacillus cereus group genomics to putative food-borne pathogens of different toxicity.</title>
        <authorList>
            <person name="Lapidus A."/>
            <person name="Goltsman E."/>
            <person name="Auger S."/>
            <person name="Galleron N."/>
            <person name="Segurens B."/>
            <person name="Dossat C."/>
            <person name="Land M.L."/>
            <person name="Broussolle V."/>
            <person name="Brillard J."/>
            <person name="Guinebretiere M.-H."/>
            <person name="Sanchis V."/>
            <person name="Nguen-the C."/>
            <person name="Lereclus D."/>
            <person name="Richardson P."/>
            <person name="Wincker P."/>
            <person name="Weissenbach J."/>
            <person name="Ehrlich S.D."/>
            <person name="Sorokin A."/>
        </authorList>
    </citation>
    <scope>NUCLEOTIDE SEQUENCE [LARGE SCALE GENOMIC DNA]</scope>
    <source>
        <strain>KBAB4</strain>
    </source>
</reference>
<proteinExistence type="inferred from homology"/>
<feature type="chain" id="PRO_1000100999" description="Large ribosomal subunit protein bL36">
    <location>
        <begin position="1"/>
        <end position="37"/>
    </location>
</feature>